<organism>
    <name type="scientific">African swine fever virus (isolate Tick/South Africa/Pretoriuskop Pr4/1996)</name>
    <name type="common">ASFV</name>
    <dbReference type="NCBI Taxonomy" id="561443"/>
    <lineage>
        <taxon>Viruses</taxon>
        <taxon>Varidnaviria</taxon>
        <taxon>Bamfordvirae</taxon>
        <taxon>Nucleocytoviricota</taxon>
        <taxon>Pokkesviricetes</taxon>
        <taxon>Asfuvirales</taxon>
        <taxon>Asfarviridae</taxon>
        <taxon>Asfivirus</taxon>
        <taxon>African swine fever virus</taxon>
    </lineage>
</organism>
<feature type="chain" id="PRO_0000373483" description="Uncharacterized protein B117L">
    <location>
        <begin position="1"/>
        <end position="112"/>
    </location>
</feature>
<feature type="transmembrane region" description="Helical" evidence="2">
    <location>
        <begin position="66"/>
        <end position="86"/>
    </location>
</feature>
<feature type="glycosylation site" description="N-linked (GlcNAc...) asparagine; by host" evidence="2">
    <location>
        <position position="29"/>
    </location>
</feature>
<feature type="glycosylation site" description="N-linked (GlcNAc...) asparagine; by host" evidence="2">
    <location>
        <position position="60"/>
    </location>
</feature>
<organismHost>
    <name type="scientific">Ornithodoros</name>
    <name type="common">relapsing fever ticks</name>
    <dbReference type="NCBI Taxonomy" id="6937"/>
</organismHost>
<organismHost>
    <name type="scientific">Phacochoerus aethiopicus</name>
    <name type="common">Warthog</name>
    <dbReference type="NCBI Taxonomy" id="85517"/>
</organismHost>
<organismHost>
    <name type="scientific">Phacochoerus africanus</name>
    <name type="common">Warthog</name>
    <dbReference type="NCBI Taxonomy" id="41426"/>
</organismHost>
<organismHost>
    <name type="scientific">Potamochoerus larvatus</name>
    <name type="common">Bushpig</name>
    <dbReference type="NCBI Taxonomy" id="273792"/>
</organismHost>
<organismHost>
    <name type="scientific">Sus scrofa</name>
    <name type="common">Pig</name>
    <dbReference type="NCBI Taxonomy" id="9823"/>
</organismHost>
<keyword id="KW-0325">Glycoprotein</keyword>
<keyword id="KW-1043">Host membrane</keyword>
<keyword id="KW-0472">Membrane</keyword>
<keyword id="KW-0812">Transmembrane</keyword>
<keyword id="KW-1133">Transmembrane helix</keyword>
<keyword id="KW-0946">Virion</keyword>
<accession>P0CA20</accession>
<sequence>MGYTIQLDKDGDYCWDEDPTHHDPYTQANATSHTAVSRAAMAAPHAAAHHAFHEPFIKLNLTDKNIFNGLGFILIVIFIYLLLITLQQMLTRHIYNTVQHCVKAHLDSKNLQ</sequence>
<name>VF117_ASFP4</name>
<protein>
    <recommendedName>
        <fullName>Uncharacterized protein B117L</fullName>
        <shortName>pB117L</shortName>
    </recommendedName>
</protein>
<proteinExistence type="inferred from homology"/>
<evidence type="ECO:0000250" key="1">
    <source>
        <dbReference type="UniProtKB" id="Q65172"/>
    </source>
</evidence>
<evidence type="ECO:0000255" key="2"/>
<evidence type="ECO:0000305" key="3"/>
<gene>
    <name type="ordered locus">Pret-095</name>
</gene>
<reference key="1">
    <citation type="submission" date="2003-03" db="EMBL/GenBank/DDBJ databases">
        <title>African swine fever virus genomes.</title>
        <authorList>
            <person name="Kutish G.F."/>
            <person name="Rock D.L."/>
        </authorList>
    </citation>
    <scope>NUCLEOTIDE SEQUENCE [LARGE SCALE GENOMIC DNA]</scope>
</reference>
<comment type="subcellular location">
    <subcellularLocation>
        <location evidence="3">Host membrane</location>
        <topology evidence="3">Single-pass membrane protein</topology>
    </subcellularLocation>
    <subcellularLocation>
        <location evidence="1">Virion</location>
    </subcellularLocation>
</comment>
<comment type="similarity">
    <text evidence="3">Belongs to the asfivirus B117L family.</text>
</comment>
<dbReference type="EMBL" id="AY261363">
    <property type="status" value="NOT_ANNOTATED_CDS"/>
    <property type="molecule type" value="Genomic_DNA"/>
</dbReference>
<dbReference type="SMR" id="P0CA20"/>
<dbReference type="Proteomes" id="UP000000859">
    <property type="component" value="Segment"/>
</dbReference>
<dbReference type="GO" id="GO:0033644">
    <property type="term" value="C:host cell membrane"/>
    <property type="evidence" value="ECO:0007669"/>
    <property type="project" value="UniProtKB-SubCell"/>
</dbReference>
<dbReference type="GO" id="GO:0016020">
    <property type="term" value="C:membrane"/>
    <property type="evidence" value="ECO:0007669"/>
    <property type="project" value="UniProtKB-KW"/>
</dbReference>
<dbReference type="GO" id="GO:0044423">
    <property type="term" value="C:virion component"/>
    <property type="evidence" value="ECO:0007669"/>
    <property type="project" value="UniProtKB-KW"/>
</dbReference>